<protein>
    <recommendedName>
        <fullName evidence="1">NADH-quinone oxidoreductase subunit A</fullName>
        <ecNumber evidence="1">7.1.1.-</ecNumber>
    </recommendedName>
    <alternativeName>
        <fullName evidence="1">NADH dehydrogenase I subunit A</fullName>
    </alternativeName>
    <alternativeName>
        <fullName evidence="1">NDH-1 subunit A</fullName>
    </alternativeName>
    <alternativeName>
        <fullName evidence="1">NUO1</fullName>
    </alternativeName>
</protein>
<feature type="chain" id="PRO_0000362656" description="NADH-quinone oxidoreductase subunit A">
    <location>
        <begin position="1"/>
        <end position="143"/>
    </location>
</feature>
<feature type="transmembrane region" description="Helical" evidence="1">
    <location>
        <begin position="7"/>
        <end position="27"/>
    </location>
</feature>
<feature type="transmembrane region" description="Helical" evidence="1">
    <location>
        <begin position="63"/>
        <end position="83"/>
    </location>
</feature>
<feature type="transmembrane region" description="Helical" evidence="1">
    <location>
        <begin position="93"/>
        <end position="113"/>
    </location>
</feature>
<sequence length="143" mass="15855">MDQTLSGFGNVFVFLALGIVFVAGGYLTARMLRPSRPNPEKNSTYECGEEAVGSAWVKFNIRFYVVALIFIIFDVEVVFLYPWATVFKQLGEFALFEALVFAGILILGLAYAWVKGDLDWVRPTPNIPKMPELPAGKPDGSRG</sequence>
<dbReference type="EC" id="7.1.1.-" evidence="1"/>
<dbReference type="EMBL" id="CP001097">
    <property type="protein sequence ID" value="ACD89923.1"/>
    <property type="molecule type" value="Genomic_DNA"/>
</dbReference>
<dbReference type="RefSeq" id="WP_012465802.1">
    <property type="nucleotide sequence ID" value="NC_010803.1"/>
</dbReference>
<dbReference type="SMR" id="B3EI93"/>
<dbReference type="STRING" id="290315.Clim_0844"/>
<dbReference type="KEGG" id="cli:Clim_0844"/>
<dbReference type="eggNOG" id="COG0838">
    <property type="taxonomic scope" value="Bacteria"/>
</dbReference>
<dbReference type="HOGENOM" id="CLU_119549_1_0_10"/>
<dbReference type="OrthoDB" id="9791970at2"/>
<dbReference type="Proteomes" id="UP000008841">
    <property type="component" value="Chromosome"/>
</dbReference>
<dbReference type="GO" id="GO:0030964">
    <property type="term" value="C:NADH dehydrogenase complex"/>
    <property type="evidence" value="ECO:0007669"/>
    <property type="project" value="TreeGrafter"/>
</dbReference>
<dbReference type="GO" id="GO:0005886">
    <property type="term" value="C:plasma membrane"/>
    <property type="evidence" value="ECO:0007669"/>
    <property type="project" value="UniProtKB-SubCell"/>
</dbReference>
<dbReference type="GO" id="GO:0008137">
    <property type="term" value="F:NADH dehydrogenase (ubiquinone) activity"/>
    <property type="evidence" value="ECO:0007669"/>
    <property type="project" value="InterPro"/>
</dbReference>
<dbReference type="GO" id="GO:0050136">
    <property type="term" value="F:NADH:ubiquinone reductase (non-electrogenic) activity"/>
    <property type="evidence" value="ECO:0007669"/>
    <property type="project" value="UniProtKB-UniRule"/>
</dbReference>
<dbReference type="GO" id="GO:0048038">
    <property type="term" value="F:quinone binding"/>
    <property type="evidence" value="ECO:0007669"/>
    <property type="project" value="UniProtKB-KW"/>
</dbReference>
<dbReference type="Gene3D" id="1.20.58.1610">
    <property type="entry name" value="NADH:ubiquinone/plastoquinone oxidoreductase, chain 3"/>
    <property type="match status" value="1"/>
</dbReference>
<dbReference type="HAMAP" id="MF_01394">
    <property type="entry name" value="NDH1_NuoA"/>
    <property type="match status" value="1"/>
</dbReference>
<dbReference type="InterPro" id="IPR023043">
    <property type="entry name" value="NAD(P)H_OxRDtase_bac/plastid"/>
</dbReference>
<dbReference type="InterPro" id="IPR000440">
    <property type="entry name" value="NADH_UbQ/plastoQ_OxRdtase_su3"/>
</dbReference>
<dbReference type="InterPro" id="IPR038430">
    <property type="entry name" value="NDAH_ubi_oxred_su3_sf"/>
</dbReference>
<dbReference type="PANTHER" id="PTHR11058">
    <property type="entry name" value="NADH-UBIQUINONE OXIDOREDUCTASE CHAIN 3"/>
    <property type="match status" value="1"/>
</dbReference>
<dbReference type="PANTHER" id="PTHR11058:SF9">
    <property type="entry name" value="NADH-UBIQUINONE OXIDOREDUCTASE CHAIN 3"/>
    <property type="match status" value="1"/>
</dbReference>
<dbReference type="Pfam" id="PF00507">
    <property type="entry name" value="Oxidored_q4"/>
    <property type="match status" value="1"/>
</dbReference>
<organism>
    <name type="scientific">Chlorobium limicola (strain DSM 245 / NBRC 103803 / 6330)</name>
    <dbReference type="NCBI Taxonomy" id="290315"/>
    <lineage>
        <taxon>Bacteria</taxon>
        <taxon>Pseudomonadati</taxon>
        <taxon>Chlorobiota</taxon>
        <taxon>Chlorobiia</taxon>
        <taxon>Chlorobiales</taxon>
        <taxon>Chlorobiaceae</taxon>
        <taxon>Chlorobium/Pelodictyon group</taxon>
        <taxon>Chlorobium</taxon>
    </lineage>
</organism>
<keyword id="KW-0997">Cell inner membrane</keyword>
<keyword id="KW-1003">Cell membrane</keyword>
<keyword id="KW-0472">Membrane</keyword>
<keyword id="KW-0520">NAD</keyword>
<keyword id="KW-0874">Quinone</keyword>
<keyword id="KW-1278">Translocase</keyword>
<keyword id="KW-0812">Transmembrane</keyword>
<keyword id="KW-1133">Transmembrane helix</keyword>
<keyword id="KW-0813">Transport</keyword>
<accession>B3EI93</accession>
<comment type="function">
    <text evidence="1">NDH-1 shuttles electrons from NADH, via FMN and iron-sulfur (Fe-S) centers, to quinones in the respiratory chain. The immediate electron acceptor for the enzyme in this species is believed to be a menaquinone. Couples the redox reaction to proton translocation (for every two electrons transferred, four hydrogen ions are translocated across the cytoplasmic membrane), and thus conserves the redox energy in a proton gradient.</text>
</comment>
<comment type="catalytic activity">
    <reaction evidence="1">
        <text>a quinone + NADH + 5 H(+)(in) = a quinol + NAD(+) + 4 H(+)(out)</text>
        <dbReference type="Rhea" id="RHEA:57888"/>
        <dbReference type="ChEBI" id="CHEBI:15378"/>
        <dbReference type="ChEBI" id="CHEBI:24646"/>
        <dbReference type="ChEBI" id="CHEBI:57540"/>
        <dbReference type="ChEBI" id="CHEBI:57945"/>
        <dbReference type="ChEBI" id="CHEBI:132124"/>
    </reaction>
</comment>
<comment type="subunit">
    <text evidence="1">NDH-1 is composed of 14 different subunits. Subunits NuoA, H, J, K, L, M, N constitute the membrane sector of the complex.</text>
</comment>
<comment type="subcellular location">
    <subcellularLocation>
        <location evidence="1">Cell inner membrane</location>
        <topology evidence="1">Multi-pass membrane protein</topology>
    </subcellularLocation>
</comment>
<comment type="similarity">
    <text evidence="1">Belongs to the complex I subunit 3 family.</text>
</comment>
<reference key="1">
    <citation type="submission" date="2008-05" db="EMBL/GenBank/DDBJ databases">
        <title>Complete sequence of Chlorobium limicola DSM 245.</title>
        <authorList>
            <consortium name="US DOE Joint Genome Institute"/>
            <person name="Lucas S."/>
            <person name="Copeland A."/>
            <person name="Lapidus A."/>
            <person name="Glavina del Rio T."/>
            <person name="Dalin E."/>
            <person name="Tice H."/>
            <person name="Bruce D."/>
            <person name="Goodwin L."/>
            <person name="Pitluck S."/>
            <person name="Schmutz J."/>
            <person name="Larimer F."/>
            <person name="Land M."/>
            <person name="Hauser L."/>
            <person name="Kyrpides N."/>
            <person name="Ovchinnikova G."/>
            <person name="Zhao F."/>
            <person name="Li T."/>
            <person name="Liu Z."/>
            <person name="Overmann J."/>
            <person name="Bryant D.A."/>
            <person name="Richardson P."/>
        </authorList>
    </citation>
    <scope>NUCLEOTIDE SEQUENCE [LARGE SCALE GENOMIC DNA]</scope>
    <source>
        <strain>DSM 245 / NBRC 103803 / 6330</strain>
    </source>
</reference>
<gene>
    <name evidence="1" type="primary">nuoA</name>
    <name type="ordered locus">Clim_0844</name>
</gene>
<name>NUOA_CHLL2</name>
<proteinExistence type="inferred from homology"/>
<evidence type="ECO:0000255" key="1">
    <source>
        <dbReference type="HAMAP-Rule" id="MF_01394"/>
    </source>
</evidence>